<protein>
    <recommendedName>
        <fullName>Chaperone protein DnaK</fullName>
    </recommendedName>
    <alternativeName>
        <fullName>HSP70</fullName>
    </alternativeName>
    <alternativeName>
        <fullName>Heat shock 70 kDa protein</fullName>
    </alternativeName>
    <alternativeName>
        <fullName>Heat shock protein 70</fullName>
    </alternativeName>
</protein>
<dbReference type="EMBL" id="AL445066">
    <property type="protein sequence ID" value="CAC12215.1"/>
    <property type="molecule type" value="Genomic_DNA"/>
</dbReference>
<dbReference type="EMBL" id="L35529">
    <property type="protein sequence ID" value="AAC41460.1"/>
    <property type="molecule type" value="Genomic_DNA"/>
</dbReference>
<dbReference type="RefSeq" id="WP_010901497.1">
    <property type="nucleotide sequence ID" value="NC_002578.1"/>
</dbReference>
<dbReference type="SMR" id="P50023"/>
<dbReference type="STRING" id="273075.gene:9572308"/>
<dbReference type="PaxDb" id="273075-Ta1087"/>
<dbReference type="EnsemblBacteria" id="CAC12215">
    <property type="protein sequence ID" value="CAC12215"/>
    <property type="gene ID" value="CAC12215"/>
</dbReference>
<dbReference type="KEGG" id="tac:Ta1087"/>
<dbReference type="eggNOG" id="arCOG03060">
    <property type="taxonomic scope" value="Archaea"/>
</dbReference>
<dbReference type="HOGENOM" id="CLU_005965_2_3_2"/>
<dbReference type="InParanoid" id="P50023"/>
<dbReference type="OrthoDB" id="9944at2157"/>
<dbReference type="Proteomes" id="UP000001024">
    <property type="component" value="Chromosome"/>
</dbReference>
<dbReference type="GO" id="GO:0005524">
    <property type="term" value="F:ATP binding"/>
    <property type="evidence" value="ECO:0007669"/>
    <property type="project" value="UniProtKB-UniRule"/>
</dbReference>
<dbReference type="GO" id="GO:0140662">
    <property type="term" value="F:ATP-dependent protein folding chaperone"/>
    <property type="evidence" value="ECO:0007669"/>
    <property type="project" value="InterPro"/>
</dbReference>
<dbReference type="GO" id="GO:0051082">
    <property type="term" value="F:unfolded protein binding"/>
    <property type="evidence" value="ECO:0007669"/>
    <property type="project" value="InterPro"/>
</dbReference>
<dbReference type="CDD" id="cd10234">
    <property type="entry name" value="ASKHA_NBD_HSP70_DnaK-like"/>
    <property type="match status" value="1"/>
</dbReference>
<dbReference type="FunFam" id="2.60.34.10:FF:000014">
    <property type="entry name" value="Chaperone protein DnaK HSP70"/>
    <property type="match status" value="1"/>
</dbReference>
<dbReference type="FunFam" id="1.20.1270.10:FF:000001">
    <property type="entry name" value="Molecular chaperone DnaK"/>
    <property type="match status" value="1"/>
</dbReference>
<dbReference type="FunFam" id="3.30.420.40:FF:000071">
    <property type="entry name" value="Molecular chaperone DnaK"/>
    <property type="match status" value="1"/>
</dbReference>
<dbReference type="FunFam" id="3.90.640.10:FF:000003">
    <property type="entry name" value="Molecular chaperone DnaK"/>
    <property type="match status" value="1"/>
</dbReference>
<dbReference type="Gene3D" id="1.20.1270.10">
    <property type="match status" value="1"/>
</dbReference>
<dbReference type="Gene3D" id="3.30.420.40">
    <property type="match status" value="2"/>
</dbReference>
<dbReference type="Gene3D" id="3.90.640.10">
    <property type="entry name" value="Actin, Chain A, domain 4"/>
    <property type="match status" value="1"/>
</dbReference>
<dbReference type="Gene3D" id="2.60.34.10">
    <property type="entry name" value="Substrate Binding Domain Of DNAk, Chain A, domain 1"/>
    <property type="match status" value="1"/>
</dbReference>
<dbReference type="HAMAP" id="MF_00332">
    <property type="entry name" value="DnaK"/>
    <property type="match status" value="1"/>
</dbReference>
<dbReference type="InterPro" id="IPR043129">
    <property type="entry name" value="ATPase_NBD"/>
</dbReference>
<dbReference type="InterPro" id="IPR012725">
    <property type="entry name" value="Chaperone_DnaK"/>
</dbReference>
<dbReference type="InterPro" id="IPR018181">
    <property type="entry name" value="Heat_shock_70_CS"/>
</dbReference>
<dbReference type="InterPro" id="IPR029048">
    <property type="entry name" value="HSP70_C_sf"/>
</dbReference>
<dbReference type="InterPro" id="IPR029047">
    <property type="entry name" value="HSP70_peptide-bd_sf"/>
</dbReference>
<dbReference type="InterPro" id="IPR013126">
    <property type="entry name" value="Hsp_70_fam"/>
</dbReference>
<dbReference type="NCBIfam" id="NF001413">
    <property type="entry name" value="PRK00290.1"/>
    <property type="match status" value="1"/>
</dbReference>
<dbReference type="NCBIfam" id="TIGR02350">
    <property type="entry name" value="prok_dnaK"/>
    <property type="match status" value="1"/>
</dbReference>
<dbReference type="PANTHER" id="PTHR19375">
    <property type="entry name" value="HEAT SHOCK PROTEIN 70KDA"/>
    <property type="match status" value="1"/>
</dbReference>
<dbReference type="Pfam" id="PF00012">
    <property type="entry name" value="HSP70"/>
    <property type="match status" value="1"/>
</dbReference>
<dbReference type="PRINTS" id="PR00301">
    <property type="entry name" value="HEATSHOCK70"/>
</dbReference>
<dbReference type="SUPFAM" id="SSF53067">
    <property type="entry name" value="Actin-like ATPase domain"/>
    <property type="match status" value="2"/>
</dbReference>
<dbReference type="SUPFAM" id="SSF100934">
    <property type="entry name" value="Heat shock protein 70kD (HSP70), C-terminal subdomain"/>
    <property type="match status" value="1"/>
</dbReference>
<dbReference type="SUPFAM" id="SSF100920">
    <property type="entry name" value="Heat shock protein 70kD (HSP70), peptide-binding domain"/>
    <property type="match status" value="1"/>
</dbReference>
<dbReference type="PROSITE" id="PS00297">
    <property type="entry name" value="HSP70_1"/>
    <property type="match status" value="1"/>
</dbReference>
<dbReference type="PROSITE" id="PS00329">
    <property type="entry name" value="HSP70_2"/>
    <property type="match status" value="1"/>
</dbReference>
<dbReference type="PROSITE" id="PS01036">
    <property type="entry name" value="HSP70_3"/>
    <property type="match status" value="1"/>
</dbReference>
<name>DNAK_THEAC</name>
<accession>P50023</accession>
<keyword id="KW-0067">ATP-binding</keyword>
<keyword id="KW-0143">Chaperone</keyword>
<keyword id="KW-0547">Nucleotide-binding</keyword>
<keyword id="KW-1185">Reference proteome</keyword>
<organism>
    <name type="scientific">Thermoplasma acidophilum (strain ATCC 25905 / DSM 1728 / JCM 9062 / NBRC 15155 / AMRC-C165)</name>
    <dbReference type="NCBI Taxonomy" id="273075"/>
    <lineage>
        <taxon>Archaea</taxon>
        <taxon>Methanobacteriati</taxon>
        <taxon>Thermoplasmatota</taxon>
        <taxon>Thermoplasmata</taxon>
        <taxon>Thermoplasmatales</taxon>
        <taxon>Thermoplasmataceae</taxon>
        <taxon>Thermoplasma</taxon>
    </lineage>
</organism>
<evidence type="ECO:0000250" key="1"/>
<evidence type="ECO:0000256" key="2">
    <source>
        <dbReference type="SAM" id="MobiDB-lite"/>
    </source>
</evidence>
<evidence type="ECO:0000305" key="3"/>
<sequence>MSKIIGIDLGTSNSAAAVVISGKPTVIPSSEGVSIGGKAFPSYVAFTKDGQMLVGEPARRQALLNPEGTIFAAKRKMGTDYKFKVFDKEFTPQQISAFILQKIKKDAEAFLGEPVNEAVITVPAYFNDNQRQATKDAGTIAGFDVKRIINEPTAAALAYGVDKSGKSEKILVFDLGGGTLDVTIMDFGDGVFQVLSTSGDTRLGGTDMDEAIVNYIADDFQKKEGIDLRKDRSAYIRLRDAAEKAKIELSTTLSTDIDLPYITVTNSGPKHIKMTLTRAKLEELISPIVERVKGPIDKALEGAKLKKTEITKLLFVGGPTRIPYVRKYVEDYLGIKAEGGVDPMEAVAIGAAIQGAVLKGEIKDIVLLDVTPLTLSVETLGGIATPIIPANTTIPVRKSQIFTTAEDMQTTVTIHVVQGERPLAKDNVSLGMFNLTGIAPAPRGVPQIEVTFDIDSNGILNVTAVDKATGKKQGITITASTKLSKEEIERMKKEAEQYAEQDRKAKEQIELLNNAESLAYSVEKTLNDAGDKVDKETKERLTNEVKDLRKAIEEKNTENVKTLMDKLSKDIQEVGAKMYQQASANTQQSAQSNSQNSGSSDGKTVDAEYKEKS</sequence>
<reference key="1">
    <citation type="journal article" date="2000" name="Nature">
        <title>The genome sequence of the thermoacidophilic scavenger Thermoplasma acidophilum.</title>
        <authorList>
            <person name="Ruepp A."/>
            <person name="Graml W."/>
            <person name="Santos-Martinez M.-L."/>
            <person name="Koretke K.K."/>
            <person name="Volker C."/>
            <person name="Mewes H.-W."/>
            <person name="Frishman D."/>
            <person name="Stocker S."/>
            <person name="Lupas A.N."/>
            <person name="Baumeister W."/>
        </authorList>
    </citation>
    <scope>NUCLEOTIDE SEQUENCE [LARGE SCALE GENOMIC DNA]</scope>
    <source>
        <strain>ATCC 25905 / DSM 1728 / JCM 9062 / NBRC 15155 / AMRC-C165</strain>
    </source>
</reference>
<reference key="2">
    <citation type="journal article" date="1994" name="Curr. Biol.">
        <title>Phylogenetic analysis of 70 kD heat shock protein sequences suggests a chimeric origin for the eukaryotic cell nucleus.</title>
        <authorList>
            <person name="Gupta R.S."/>
            <person name="Singh B."/>
        </authorList>
    </citation>
    <scope>NUCLEOTIDE SEQUENCE [GENOMIC DNA] OF 1-594</scope>
</reference>
<comment type="function">
    <text evidence="1">Acts as a chaperone.</text>
</comment>
<comment type="similarity">
    <text evidence="3">Belongs to the heat shock protein 70 family.</text>
</comment>
<proteinExistence type="inferred from homology"/>
<feature type="chain" id="PRO_0000078602" description="Chaperone protein DnaK">
    <location>
        <begin position="1"/>
        <end position="613"/>
    </location>
</feature>
<feature type="region of interest" description="Disordered" evidence="2">
    <location>
        <begin position="578"/>
        <end position="613"/>
    </location>
</feature>
<feature type="compositionally biased region" description="Low complexity" evidence="2">
    <location>
        <begin position="580"/>
        <end position="600"/>
    </location>
</feature>
<feature type="compositionally biased region" description="Basic and acidic residues" evidence="2">
    <location>
        <begin position="603"/>
        <end position="613"/>
    </location>
</feature>
<feature type="sequence conflict" description="In Ref. 2; AAC41460." evidence="3" ref="2">
    <original>G</original>
    <variation>A</variation>
    <location>
        <position position="190"/>
    </location>
</feature>
<feature type="sequence conflict" description="In Ref. 2; AAC41460." evidence="3" ref="2">
    <original>I</original>
    <variation>Y</variation>
    <location>
        <position position="285"/>
    </location>
</feature>
<feature type="sequence conflict" description="In Ref. 2; AAC41460." evidence="3" ref="2">
    <original>A</original>
    <variation>SP</variation>
    <location>
        <position position="337"/>
    </location>
</feature>
<feature type="sequence conflict" description="In Ref. 2; AAC41460." evidence="3" ref="2">
    <original>L</original>
    <variation>V</variation>
    <location>
        <position position="373"/>
    </location>
</feature>
<feature type="sequence conflict" description="In Ref. 2; AAC41460." evidence="3" ref="2">
    <original>ID</original>
    <variation>MH</variation>
    <location>
        <begin position="454"/>
        <end position="455"/>
    </location>
</feature>
<feature type="sequence conflict" description="In Ref. 2; AAC41460." evidence="3" ref="2">
    <original>TLND</original>
    <variation>SLKH</variation>
    <location>
        <begin position="525"/>
        <end position="528"/>
    </location>
</feature>
<gene>
    <name type="primary">dnaK</name>
    <name type="ordered locus">Ta1087</name>
</gene>